<organism>
    <name type="scientific">Arthroderma gypseum (strain ATCC MYA-4604 / CBS 118893)</name>
    <name type="common">Microsporum gypseum</name>
    <dbReference type="NCBI Taxonomy" id="535722"/>
    <lineage>
        <taxon>Eukaryota</taxon>
        <taxon>Fungi</taxon>
        <taxon>Dikarya</taxon>
        <taxon>Ascomycota</taxon>
        <taxon>Pezizomycotina</taxon>
        <taxon>Eurotiomycetes</taxon>
        <taxon>Eurotiomycetidae</taxon>
        <taxon>Onygenales</taxon>
        <taxon>Arthrodermataceae</taxon>
        <taxon>Nannizzia</taxon>
    </lineage>
</organism>
<proteinExistence type="inferred from homology"/>
<dbReference type="EC" id="3.4.17.-"/>
<dbReference type="EMBL" id="DS989825">
    <property type="protein sequence ID" value="EFR01699.1"/>
    <property type="molecule type" value="Genomic_DNA"/>
</dbReference>
<dbReference type="RefSeq" id="XP_003172110.1">
    <property type="nucleotide sequence ID" value="XM_003172062.1"/>
</dbReference>
<dbReference type="SMR" id="E4UW91"/>
<dbReference type="STRING" id="535722.E4UW91"/>
<dbReference type="GeneID" id="10027378"/>
<dbReference type="VEuPathDB" id="FungiDB:MGYG_04702"/>
<dbReference type="eggNOG" id="KOG2275">
    <property type="taxonomic scope" value="Eukaryota"/>
</dbReference>
<dbReference type="HOGENOM" id="CLU_021802_3_0_1"/>
<dbReference type="InParanoid" id="E4UW91"/>
<dbReference type="OMA" id="RLHKGVM"/>
<dbReference type="OrthoDB" id="3064516at2759"/>
<dbReference type="Proteomes" id="UP000002669">
    <property type="component" value="Unassembled WGS sequence"/>
</dbReference>
<dbReference type="GO" id="GO:0005576">
    <property type="term" value="C:extracellular region"/>
    <property type="evidence" value="ECO:0007669"/>
    <property type="project" value="UniProtKB-SubCell"/>
</dbReference>
<dbReference type="GO" id="GO:0046872">
    <property type="term" value="F:metal ion binding"/>
    <property type="evidence" value="ECO:0007669"/>
    <property type="project" value="UniProtKB-KW"/>
</dbReference>
<dbReference type="GO" id="GO:0008233">
    <property type="term" value="F:peptidase activity"/>
    <property type="evidence" value="ECO:0007669"/>
    <property type="project" value="UniProtKB-KW"/>
</dbReference>
<dbReference type="GO" id="GO:0006508">
    <property type="term" value="P:proteolysis"/>
    <property type="evidence" value="ECO:0007669"/>
    <property type="project" value="UniProtKB-KW"/>
</dbReference>
<dbReference type="CDD" id="cd05652">
    <property type="entry name" value="M20_ArgE_DapE-like_fungal"/>
    <property type="match status" value="1"/>
</dbReference>
<dbReference type="Gene3D" id="3.30.70.360">
    <property type="match status" value="1"/>
</dbReference>
<dbReference type="Gene3D" id="3.40.630.10">
    <property type="entry name" value="Zn peptidases"/>
    <property type="match status" value="1"/>
</dbReference>
<dbReference type="InterPro" id="IPR036264">
    <property type="entry name" value="Bact_exopeptidase_dim_dom"/>
</dbReference>
<dbReference type="InterPro" id="IPR002933">
    <property type="entry name" value="Peptidase_M20"/>
</dbReference>
<dbReference type="InterPro" id="IPR011650">
    <property type="entry name" value="Peptidase_M20_dimer"/>
</dbReference>
<dbReference type="InterPro" id="IPR050072">
    <property type="entry name" value="Peptidase_M20A"/>
</dbReference>
<dbReference type="PANTHER" id="PTHR43808">
    <property type="entry name" value="ACETYLORNITHINE DEACETYLASE"/>
    <property type="match status" value="1"/>
</dbReference>
<dbReference type="PANTHER" id="PTHR43808:SF8">
    <property type="entry name" value="PEPTIDASE M20 DIMERISATION DOMAIN-CONTAINING PROTEIN"/>
    <property type="match status" value="1"/>
</dbReference>
<dbReference type="Pfam" id="PF07687">
    <property type="entry name" value="M20_dimer"/>
    <property type="match status" value="1"/>
</dbReference>
<dbReference type="Pfam" id="PF01546">
    <property type="entry name" value="Peptidase_M20"/>
    <property type="match status" value="1"/>
</dbReference>
<dbReference type="SUPFAM" id="SSF55031">
    <property type="entry name" value="Bacterial exopeptidase dimerisation domain"/>
    <property type="match status" value="1"/>
</dbReference>
<dbReference type="SUPFAM" id="SSF53187">
    <property type="entry name" value="Zn-dependent exopeptidases"/>
    <property type="match status" value="1"/>
</dbReference>
<name>P20D1_ARTGP</name>
<reference key="1">
    <citation type="journal article" date="2012" name="MBio">
        <title>Comparative genome analysis of Trichophyton rubrum and related dermatophytes reveals candidate genes involved in infection.</title>
        <authorList>
            <person name="Martinez D.A."/>
            <person name="Oliver B.G."/>
            <person name="Graeser Y."/>
            <person name="Goldberg J.M."/>
            <person name="Li W."/>
            <person name="Martinez-Rossi N.M."/>
            <person name="Monod M."/>
            <person name="Shelest E."/>
            <person name="Barton R.C."/>
            <person name="Birch E."/>
            <person name="Brakhage A.A."/>
            <person name="Chen Z."/>
            <person name="Gurr S.J."/>
            <person name="Heiman D."/>
            <person name="Heitman J."/>
            <person name="Kosti I."/>
            <person name="Rossi A."/>
            <person name="Saif S."/>
            <person name="Samalova M."/>
            <person name="Saunders C.W."/>
            <person name="Shea T."/>
            <person name="Summerbell R.C."/>
            <person name="Xu J."/>
            <person name="Young S."/>
            <person name="Zeng Q."/>
            <person name="Birren B.W."/>
            <person name="Cuomo C.A."/>
            <person name="White T.C."/>
        </authorList>
    </citation>
    <scope>NUCLEOTIDE SEQUENCE [LARGE SCALE GENOMIC DNA]</scope>
    <source>
        <strain>ATCC MYA-4604 / CBS 118893</strain>
    </source>
</reference>
<protein>
    <recommendedName>
        <fullName>Probable carboxypeptidase MGYG_04702</fullName>
        <ecNumber>3.4.17.-</ecNumber>
    </recommendedName>
    <alternativeName>
        <fullName>Peptidase M20 domain-containing protein MGYG_04702</fullName>
    </alternativeName>
</protein>
<comment type="cofactor">
    <cofactor evidence="1">
        <name>Zn(2+)</name>
        <dbReference type="ChEBI" id="CHEBI:29105"/>
    </cofactor>
    <text evidence="1">Binds 2 Zn(2+) ions per subunit.</text>
</comment>
<comment type="subcellular location">
    <subcellularLocation>
        <location evidence="3">Secreted</location>
    </subcellularLocation>
</comment>
<comment type="similarity">
    <text evidence="3">Belongs to the peptidase M20A family.</text>
</comment>
<keyword id="KW-0325">Glycoprotein</keyword>
<keyword id="KW-0378">Hydrolase</keyword>
<keyword id="KW-0479">Metal-binding</keyword>
<keyword id="KW-0645">Protease</keyword>
<keyword id="KW-1185">Reference proteome</keyword>
<keyword id="KW-0964">Secreted</keyword>
<keyword id="KW-0732">Signal</keyword>
<keyword id="KW-0862">Zinc</keyword>
<sequence>MQKTYLLALVSLLASSLVEARSTIADQTRLDVGGSDESFDGIDGIDPNNSNVLTHKLMDKVIASSELLSLHRSLVEIKSISDNEQAVGGFLMDYLSSKNFTVEKQYVDYDDPTGKPIRSNRRFNIYAYPGDSASPGIILTSHIDTVPPFIPYSLSHPESDSFKRDDILISGRGTVDDKASVACQIIAAMEHLEKHPDIPIGLLFVVSEEVGGKGMSTFSDSRLNSGTYHTIIFGEPTERALVAGHKGMVSFGIRVHGKPAHSGYPWLGRSAVSEILPILAEVDRLGDIPVSQGGLPSSEKYGRTTLNIGFMSGGVAANVVPEQAVAKVAVRLAAGDPEDAKDIIFRAIRNAATKHRKDATVVISNGHEQPKGDIEVIFGLEAYGVVDIDADVDGFNVTTVNYGTDVPHWKIYGDNVKRYLYGPGTIFVAHGKDEALTVGELEAGLEGYKTLVAKAAERERT</sequence>
<feature type="signal peptide" evidence="2">
    <location>
        <begin position="1"/>
        <end position="20"/>
    </location>
</feature>
<feature type="chain" id="PRO_0000411225" description="Probable carboxypeptidase MGYG_04702">
    <location>
        <begin position="21"/>
        <end position="461"/>
    </location>
</feature>
<feature type="active site" description="Proton acceptor" evidence="1">
    <location>
        <position position="208"/>
    </location>
</feature>
<feature type="binding site" evidence="1">
    <location>
        <position position="176"/>
    </location>
    <ligand>
        <name>Zn(2+)</name>
        <dbReference type="ChEBI" id="CHEBI:29105"/>
        <label>1</label>
    </ligand>
</feature>
<feature type="binding site" evidence="1">
    <location>
        <position position="176"/>
    </location>
    <ligand>
        <name>Zn(2+)</name>
        <dbReference type="ChEBI" id="CHEBI:29105"/>
        <label>2</label>
    </ligand>
</feature>
<feature type="binding site" evidence="1">
    <location>
        <position position="209"/>
    </location>
    <ligand>
        <name>Zn(2+)</name>
        <dbReference type="ChEBI" id="CHEBI:29105"/>
        <label>1</label>
    </ligand>
</feature>
<feature type="glycosylation site" description="N-linked (GlcNAc...) asparagine" evidence="2">
    <location>
        <position position="48"/>
    </location>
</feature>
<feature type="glycosylation site" description="N-linked (GlcNAc...) asparagine" evidence="2">
    <location>
        <position position="99"/>
    </location>
</feature>
<feature type="glycosylation site" description="N-linked (GlcNAc...) asparagine" evidence="2">
    <location>
        <position position="396"/>
    </location>
</feature>
<evidence type="ECO:0000250" key="1"/>
<evidence type="ECO:0000255" key="2"/>
<evidence type="ECO:0000305" key="3"/>
<accession>E4UW91</accession>
<gene>
    <name type="ORF">MGYG_04702</name>
</gene>